<comment type="function">
    <text evidence="1">Subunit of STT3A-containing oligosaccharyl transferase (OST-A) complex that catalyzes the initial transfer of a defined glycan (Glc(3)Man(9)GlcNAc(2) in eukaryotes) from the lipid carrier dolichol-pyrophosphate to an asparagine residue within an Asn-X-Ser/Thr consensus motif in nascent polypeptide chains, the first step in protein N-glycosylation. N-glycosylation occurs cotranslationally and the complex associates with the Sec61 complex at the channel-forming translocon complex that mediates protein translocation across the endoplasmic reticulum (ER). Within the OST-A complex, acts as an adapter that anchors the OST-A complex to the Sec61 complex. May be involved in N-glycosylation of APP (amyloid-beta precursor protein). Can modulate gamma-secretase cleavage of APP by enhancing endoprotelysis of PSEN1.</text>
</comment>
<comment type="pathway">
    <text evidence="1">Protein modification; protein glycosylation.</text>
</comment>
<comment type="subunit">
    <text evidence="1">Component of STT3A-containing oligosaccharyl transferase (OST-A) complex. STT3A-containing complex assembly occurs through the formation of 3 subcomplexes. Subcomplex 1 contains RPN1 and TMEM258, subcomplex 2 contains the STT3A-specific subunits STT3A, DC2/OSTC, and KCP2 as well as the core subunit OST4, and subcomplex 3 contains RPN2, DAD1, and OST48. The OST-A complex can form stable complexes with the Sec61 complex or with both the Sec61 and TRAP complexes. Interacts with PSEN1 and NCSTN; indicative for an association with the gamma-secretase complex.</text>
</comment>
<comment type="subcellular location">
    <subcellularLocation>
        <location evidence="1">Endoplasmic reticulum</location>
    </subcellularLocation>
    <subcellularLocation>
        <location evidence="3">Membrane</location>
        <topology evidence="3">Multi-pass membrane protein</topology>
    </subcellularLocation>
</comment>
<comment type="similarity">
    <text evidence="3">Belongs to the OSTC family.</text>
</comment>
<reference key="1">
    <citation type="submission" date="2006-01" db="EMBL/GenBank/DDBJ databases">
        <authorList>
            <consortium name="NIH - Mammalian Gene Collection (MGC) project"/>
        </authorList>
    </citation>
    <scope>NUCLEOTIDE SEQUENCE [LARGE SCALE MRNA]</scope>
    <source>
        <strain>Hereford</strain>
        <tissue>Hypothalamus</tissue>
    </source>
</reference>
<proteinExistence type="evidence at transcript level"/>
<dbReference type="EMBL" id="BC112676">
    <property type="protein sequence ID" value="AAI12677.1"/>
    <property type="molecule type" value="mRNA"/>
</dbReference>
<dbReference type="RefSeq" id="NP_001070560.1">
    <property type="nucleotide sequence ID" value="NM_001077092.1"/>
</dbReference>
<dbReference type="SMR" id="Q2KID7"/>
<dbReference type="FunCoup" id="Q2KID7">
    <property type="interactions" value="1811"/>
</dbReference>
<dbReference type="STRING" id="9913.ENSBTAP00000050205"/>
<dbReference type="PaxDb" id="9913-ENSBTAP00000050205"/>
<dbReference type="PeptideAtlas" id="Q2KID7"/>
<dbReference type="Ensembl" id="ENSBTAT00000035535.5">
    <property type="protein sequence ID" value="ENSBTAP00000050205.2"/>
    <property type="gene ID" value="ENSBTAG00000011611.7"/>
</dbReference>
<dbReference type="GeneID" id="768033"/>
<dbReference type="KEGG" id="bta:768033"/>
<dbReference type="CTD" id="58505"/>
<dbReference type="VEuPathDB" id="HostDB:ENSBTAG00000011611"/>
<dbReference type="VGNC" id="VGNC:32478">
    <property type="gene designation" value="OSTC"/>
</dbReference>
<dbReference type="eggNOG" id="KOG3356">
    <property type="taxonomic scope" value="Eukaryota"/>
</dbReference>
<dbReference type="GeneTree" id="ENSGT00390000001376"/>
<dbReference type="HOGENOM" id="CLU_109136_1_0_1"/>
<dbReference type="InParanoid" id="Q2KID7"/>
<dbReference type="OMA" id="CWIFMRM"/>
<dbReference type="OrthoDB" id="10256333at2759"/>
<dbReference type="TreeFam" id="TF323315"/>
<dbReference type="UniPathway" id="UPA00378"/>
<dbReference type="Proteomes" id="UP000009136">
    <property type="component" value="Chromosome 6"/>
</dbReference>
<dbReference type="Bgee" id="ENSBTAG00000011611">
    <property type="expression patterns" value="Expressed in abomasum and 107 other cell types or tissues"/>
</dbReference>
<dbReference type="GO" id="GO:0008250">
    <property type="term" value="C:oligosaccharyltransferase complex"/>
    <property type="evidence" value="ECO:0000318"/>
    <property type="project" value="GO_Central"/>
</dbReference>
<dbReference type="GO" id="GO:0006486">
    <property type="term" value="P:protein glycosylation"/>
    <property type="evidence" value="ECO:0007669"/>
    <property type="project" value="UniProtKB-UniPathway"/>
</dbReference>
<dbReference type="InterPro" id="IPR021149">
    <property type="entry name" value="OligosaccharylTrfase_OST3/OST6"/>
</dbReference>
<dbReference type="InterPro" id="IPR042416">
    <property type="entry name" value="OSTC"/>
</dbReference>
<dbReference type="PANTHER" id="PTHR13160">
    <property type="entry name" value="OLIGOSACCHARYLTRANSFERASE COMPLEX SUBUNIT OSTC"/>
    <property type="match status" value="1"/>
</dbReference>
<dbReference type="PANTHER" id="PTHR13160:SF9">
    <property type="entry name" value="OLIGOSACCHARYLTRANSFERASE COMPLEX SUBUNIT OSTC"/>
    <property type="match status" value="1"/>
</dbReference>
<dbReference type="Pfam" id="PF04756">
    <property type="entry name" value="OST3_OST6"/>
    <property type="match status" value="1"/>
</dbReference>
<sequence>MESLYRVPFLVLECPNLKLKKPPWVHMPSAMTVYALVVVSYFLITGGIIYDVIVEPPSVGSVTDEHGHQRPVAFLAYRVNGQYIMEGLASSFLFTMGGLGFIILDRSNAPNIPKLNRFLLLFIGFVCVLLSFFMARVFMRMKLPGYLMG</sequence>
<gene>
    <name evidence="1" type="primary">OSTC</name>
</gene>
<protein>
    <recommendedName>
        <fullName evidence="1">Oligosaccharyltransferase complex subunit OSTC</fullName>
    </recommendedName>
</protein>
<evidence type="ECO:0000250" key="1">
    <source>
        <dbReference type="UniProtKB" id="Q9NRP0"/>
    </source>
</evidence>
<evidence type="ECO:0000255" key="2"/>
<evidence type="ECO:0000305" key="3"/>
<organism>
    <name type="scientific">Bos taurus</name>
    <name type="common">Bovine</name>
    <dbReference type="NCBI Taxonomy" id="9913"/>
    <lineage>
        <taxon>Eukaryota</taxon>
        <taxon>Metazoa</taxon>
        <taxon>Chordata</taxon>
        <taxon>Craniata</taxon>
        <taxon>Vertebrata</taxon>
        <taxon>Euteleostomi</taxon>
        <taxon>Mammalia</taxon>
        <taxon>Eutheria</taxon>
        <taxon>Laurasiatheria</taxon>
        <taxon>Artiodactyla</taxon>
        <taxon>Ruminantia</taxon>
        <taxon>Pecora</taxon>
        <taxon>Bovidae</taxon>
        <taxon>Bovinae</taxon>
        <taxon>Bos</taxon>
    </lineage>
</organism>
<accession>Q2KID7</accession>
<feature type="chain" id="PRO_0000320601" description="Oligosaccharyltransferase complex subunit OSTC">
    <location>
        <begin position="1"/>
        <end position="149"/>
    </location>
</feature>
<feature type="topological domain" description="Cytoplasmic" evidence="2">
    <location>
        <begin position="1"/>
        <end position="32"/>
    </location>
</feature>
<feature type="transmembrane region" description="Helical" evidence="2">
    <location>
        <begin position="33"/>
        <end position="53"/>
    </location>
</feature>
<feature type="topological domain" description="Extracellular" evidence="2">
    <location>
        <begin position="54"/>
        <end position="83"/>
    </location>
</feature>
<feature type="transmembrane region" description="Helical" evidence="2">
    <location>
        <begin position="84"/>
        <end position="104"/>
    </location>
</feature>
<feature type="topological domain" description="Cytoplasmic" evidence="2">
    <location>
        <begin position="105"/>
        <end position="117"/>
    </location>
</feature>
<feature type="transmembrane region" description="Helical" evidence="2">
    <location>
        <begin position="118"/>
        <end position="138"/>
    </location>
</feature>
<feature type="topological domain" description="Extracellular" evidence="2">
    <location>
        <begin position="139"/>
        <end position="149"/>
    </location>
</feature>
<keyword id="KW-0256">Endoplasmic reticulum</keyword>
<keyword id="KW-0472">Membrane</keyword>
<keyword id="KW-1185">Reference proteome</keyword>
<keyword id="KW-0812">Transmembrane</keyword>
<keyword id="KW-1133">Transmembrane helix</keyword>
<name>OSTC_BOVIN</name>